<name>ECEL1_HUMAN</name>
<organism>
    <name type="scientific">Homo sapiens</name>
    <name type="common">Human</name>
    <dbReference type="NCBI Taxonomy" id="9606"/>
    <lineage>
        <taxon>Eukaryota</taxon>
        <taxon>Metazoa</taxon>
        <taxon>Chordata</taxon>
        <taxon>Craniata</taxon>
        <taxon>Vertebrata</taxon>
        <taxon>Euteleostomi</taxon>
        <taxon>Mammalia</taxon>
        <taxon>Eutheria</taxon>
        <taxon>Euarchontoglires</taxon>
        <taxon>Primates</taxon>
        <taxon>Haplorrhini</taxon>
        <taxon>Catarrhini</taxon>
        <taxon>Hominidae</taxon>
        <taxon>Homo</taxon>
    </lineage>
</organism>
<sequence length="775" mass="87791">MEPPYSLTAHYDEFQEVKYVSRCGAGGARGASLPPGFPLGAARSATGARSGLPRWNRREVCLLSGLVFAAGLCAILAAMLALKYLGPVAAGGGACPEGCPERKAFARAARFLAANLDASIDPCQDFYSFACGGWLRRHAIPDDKLTYGTIAAIGEQNEERLRRLLARPGGGPGGAAQRKVRAFFRSCLDMREIERLGPRPMLEVIEDCGGWDLGGAEERPGVAARWDLNRLLYKAQGVYSAAALFSLTVSLDDRNSSRYVIRIDQDGLTLPERTLYLAQDEDSEKILAAYRVFMERVLSLLGADAVEQKAQEILQVEQQLANITVSEHDDLRRDVSSMYNKVTLGQLQKITPHLRWKWLLDQIFQEDFSEEEEVVLLATDYMQQVSQLIRSTPHRVLHNYLVWRVVVVLSEHLSPPFREALHELAQEMEGSDKPQELARVCLGQANRHFGMALGALFVHEHFSAASKAKVQQLVEDIKYILGQRLEELDWMDAETRAAARAKLQYMMVMVGYPDFLLKPDAVDKEYEFEVHEKTYFKNILNSIRFSIQLSVKKIRQEVDKSTWLLPPQALNAYYLPNKNQMVFPAGILQPTLYDPDFPQSLNYGGIGTIIGHELTHGYDDWGGQYDRSGNLLHWWTEASYSRFLRKAECIVRLYDNFTVYNQRVNGKHTLGENIADMGGLKLAYHAYQKWVREHGPEHPLPRLKYTHDQLFFIAFAQNWCIKRRSQSIYLQVLTDKHAPEHYRVLGSVSQFEEFGRAFHCPKDSPMNPAHKCSVW</sequence>
<evidence type="ECO:0000250" key="1"/>
<evidence type="ECO:0000255" key="2"/>
<evidence type="ECO:0000255" key="3">
    <source>
        <dbReference type="PROSITE-ProRule" id="PRU01233"/>
    </source>
</evidence>
<evidence type="ECO:0000255" key="4">
    <source>
        <dbReference type="PROSITE-ProRule" id="PRU10095"/>
    </source>
</evidence>
<evidence type="ECO:0000269" key="5">
    <source>
    </source>
</evidence>
<evidence type="ECO:0000269" key="6">
    <source>
    </source>
</evidence>
<evidence type="ECO:0000269" key="7">
    <source>
    </source>
</evidence>
<evidence type="ECO:0000269" key="8">
    <source>
    </source>
</evidence>
<evidence type="ECO:0000269" key="9">
    <source>
    </source>
</evidence>
<evidence type="ECO:0000269" key="10">
    <source>
    </source>
</evidence>
<evidence type="ECO:0000269" key="11">
    <source>
    </source>
</evidence>
<evidence type="ECO:0000269" key="12">
    <source>
    </source>
</evidence>
<evidence type="ECO:0000269" key="13">
    <source ref="3"/>
</evidence>
<evidence type="ECO:0000303" key="14">
    <source ref="3"/>
</evidence>
<evidence type="ECO:0000305" key="15"/>
<proteinExistence type="evidence at protein level"/>
<keyword id="KW-0025">Alternative splicing</keyword>
<keyword id="KW-0225">Disease variant</keyword>
<keyword id="KW-1015">Disulfide bond</keyword>
<keyword id="KW-0325">Glycoprotein</keyword>
<keyword id="KW-0378">Hydrolase</keyword>
<keyword id="KW-0472">Membrane</keyword>
<keyword id="KW-0479">Metal-binding</keyword>
<keyword id="KW-0482">Metalloprotease</keyword>
<keyword id="KW-0645">Protease</keyword>
<keyword id="KW-1267">Proteomics identification</keyword>
<keyword id="KW-1185">Reference proteome</keyword>
<keyword id="KW-0735">Signal-anchor</keyword>
<keyword id="KW-0812">Transmembrane</keyword>
<keyword id="KW-1133">Transmembrane helix</keyword>
<keyword id="KW-0862">Zinc</keyword>
<protein>
    <recommendedName>
        <fullName>Endothelin-converting enzyme-like 1</fullName>
        <ecNumber>3.4.24.-</ecNumber>
    </recommendedName>
    <alternativeName>
        <fullName>Xce protein</fullName>
    </alternativeName>
</protein>
<accession>O95672</accession>
<accession>Q45UD9</accession>
<accession>Q53RF9</accession>
<accession>Q6UW86</accession>
<accession>Q86TH4</accession>
<accession>Q9NY95</accession>
<gene>
    <name type="primary">ECEL1</name>
    <name type="synonym">XCE</name>
    <name type="ORF">UNQ2431/PRO4991</name>
</gene>
<comment type="function">
    <text>May contribute to the degradation of peptide hormones and be involved in the inactivation of neuronal peptides.</text>
</comment>
<comment type="cofactor">
    <cofactor evidence="1">
        <name>Zn(2+)</name>
        <dbReference type="ChEBI" id="CHEBI:29105"/>
    </cofactor>
    <text evidence="1">Binds 1 zinc ion.</text>
</comment>
<comment type="subcellular location">
    <subcellularLocation>
        <location evidence="1">Membrane</location>
        <topology evidence="1">Single-pass type II membrane protein</topology>
    </subcellularLocation>
</comment>
<comment type="alternative products">
    <event type="alternative splicing"/>
    <isoform>
        <id>O95672-1</id>
        <name>1</name>
        <sequence type="displayed"/>
    </isoform>
    <isoform>
        <id>O95672-2</id>
        <name>2</name>
        <sequence type="described" ref="VSP_017544"/>
    </isoform>
</comment>
<comment type="tissue specificity">
    <text>Highly expressed in the CNS, in particular in putamen, spinal cord, medulla and subthalamic nucleus. A strong signal was also detected in uterine subepithelial cells and around renal blood vessels. Detected at lower levels in amygdala, caudate, thalamus, pancreas and skeletal muscle. Detected at very low levels in substantia nigra, cerebellum, cortex, corpus callosum and hippocampus.</text>
</comment>
<comment type="PTM">
    <text>N-glycosylated.</text>
</comment>
<comment type="disease" evidence="8 9 10 11">
    <disease id="DI-03688">
        <name>Arthrogryposis, distal, 5D</name>
        <acronym>DA5D</acronym>
        <description>An autosomal recessive form of distal arthrogryposis, a disease characterized by congenital joint contractures that mainly involve two or more distal parts of the limbs, in the absence of a primary neurological or muscle disease. DA5D is characterized by severe camptodactyly of the hands, mild camptodactyly of the toes, clubfoot and/or a calcaneovalgus deformity, extension contractures of the knee, unilateral ptosis or ptosis that is more severe on one side, a round-shaped face, arched eyebrows, a bulbous upturned nose, and micrognathia. Patients do not have ophthalmoplegia.</description>
        <dbReference type="MIM" id="615065"/>
    </disease>
    <text evidence="10">The disease is caused by variants affecting the gene represented in this entry. ECEL1 mutations have also been found in patients with arthrogryposis, significant ophthalmoplegia, and refractive errors (PubMed:23808592).</text>
</comment>
<comment type="similarity">
    <text evidence="3 15">Belongs to the peptidase M13 family.</text>
</comment>
<reference key="1">
    <citation type="journal article" date="1999" name="Brain Res. Mol. Brain Res.">
        <title>XCE, a new member of the endothelin-converting enzyme and neutral endopeptidase family, is preferentially expressed in the CNS.</title>
        <authorList>
            <person name="Valdenaire O."/>
            <person name="Richards J.G."/>
            <person name="Faull R.L.M."/>
            <person name="Schweizer A."/>
        </authorList>
    </citation>
    <scope>NUCLEOTIDE SEQUENCE [MRNA] (ISOFORM 1)</scope>
    <scope>VARIANT TYR-328</scope>
    <source>
        <tissue>Caudate nucleus</tissue>
        <tissue>Spinal cord</tissue>
    </source>
</reference>
<reference key="2">
    <citation type="journal article" date="2000" name="Biochem. J.">
        <title>Organization and chromosomal localization of the human ECEL1 (XCE) gene encoding a zinc metallopeptidase involved in the nervous control of respiration.</title>
        <authorList>
            <person name="Valdenaire O."/>
            <person name="Rohrbacher E."/>
            <person name="Langeveld A."/>
            <person name="Schweizer A."/>
            <person name="Meijers C."/>
        </authorList>
    </citation>
    <scope>NUCLEOTIDE SEQUENCE [GENOMIC DNA]</scope>
    <scope>VARIANT TYR-328</scope>
</reference>
<reference key="3">
    <citation type="submission" date="2005-07" db="EMBL/GenBank/DDBJ databases">
        <authorList>
            <person name="Lin L."/>
            <person name="Nong W."/>
            <person name="Zhou G."/>
            <person name="Ke R."/>
            <person name="Shen C."/>
            <person name="Zhong G."/>
            <person name="Zheng Z."/>
            <person name="Liang M."/>
            <person name="Huang B."/>
            <person name="Li H."/>
            <person name="Yang S."/>
        </authorList>
    </citation>
    <scope>NUCLEOTIDE SEQUENCE [MRNA] (ISOFORM 2)</scope>
    <scope>VARIANT TYR-328</scope>
</reference>
<reference key="4">
    <citation type="journal article" date="2003" name="Genome Res.">
        <title>The secreted protein discovery initiative (SPDI), a large-scale effort to identify novel human secreted and transmembrane proteins: a bioinformatics assessment.</title>
        <authorList>
            <person name="Clark H.F."/>
            <person name="Gurney A.L."/>
            <person name="Abaya E."/>
            <person name="Baker K."/>
            <person name="Baldwin D.T."/>
            <person name="Brush J."/>
            <person name="Chen J."/>
            <person name="Chow B."/>
            <person name="Chui C."/>
            <person name="Crowley C."/>
            <person name="Currell B."/>
            <person name="Deuel B."/>
            <person name="Dowd P."/>
            <person name="Eaton D."/>
            <person name="Foster J.S."/>
            <person name="Grimaldi C."/>
            <person name="Gu Q."/>
            <person name="Hass P.E."/>
            <person name="Heldens S."/>
            <person name="Huang A."/>
            <person name="Kim H.S."/>
            <person name="Klimowski L."/>
            <person name="Jin Y."/>
            <person name="Johnson S."/>
            <person name="Lee J."/>
            <person name="Lewis L."/>
            <person name="Liao D."/>
            <person name="Mark M.R."/>
            <person name="Robbie E."/>
            <person name="Sanchez C."/>
            <person name="Schoenfeld J."/>
            <person name="Seshagiri S."/>
            <person name="Simmons L."/>
            <person name="Singh J."/>
            <person name="Smith V."/>
            <person name="Stinson J."/>
            <person name="Vagts A."/>
            <person name="Vandlen R.L."/>
            <person name="Watanabe C."/>
            <person name="Wieand D."/>
            <person name="Woods K."/>
            <person name="Xie M.-H."/>
            <person name="Yansura D.G."/>
            <person name="Yi S."/>
            <person name="Yu G."/>
            <person name="Yuan J."/>
            <person name="Zhang M."/>
            <person name="Zhang Z."/>
            <person name="Goddard A.D."/>
            <person name="Wood W.I."/>
            <person name="Godowski P.J."/>
            <person name="Gray A.M."/>
        </authorList>
    </citation>
    <scope>NUCLEOTIDE SEQUENCE [LARGE SCALE MRNA] (ISOFORM 1)</scope>
    <scope>VARIANT TYR-328</scope>
</reference>
<reference key="5">
    <citation type="journal article" date="2005" name="Nature">
        <title>Generation and annotation of the DNA sequences of human chromosomes 2 and 4.</title>
        <authorList>
            <person name="Hillier L.W."/>
            <person name="Graves T.A."/>
            <person name="Fulton R.S."/>
            <person name="Fulton L.A."/>
            <person name="Pepin K.H."/>
            <person name="Minx P."/>
            <person name="Wagner-McPherson C."/>
            <person name="Layman D."/>
            <person name="Wylie K."/>
            <person name="Sekhon M."/>
            <person name="Becker M.C."/>
            <person name="Fewell G.A."/>
            <person name="Delehaunty K.D."/>
            <person name="Miner T.L."/>
            <person name="Nash W.E."/>
            <person name="Kremitzki C."/>
            <person name="Oddy L."/>
            <person name="Du H."/>
            <person name="Sun H."/>
            <person name="Bradshaw-Cordum H."/>
            <person name="Ali J."/>
            <person name="Carter J."/>
            <person name="Cordes M."/>
            <person name="Harris A."/>
            <person name="Isak A."/>
            <person name="van Brunt A."/>
            <person name="Nguyen C."/>
            <person name="Du F."/>
            <person name="Courtney L."/>
            <person name="Kalicki J."/>
            <person name="Ozersky P."/>
            <person name="Abbott S."/>
            <person name="Armstrong J."/>
            <person name="Belter E.A."/>
            <person name="Caruso L."/>
            <person name="Cedroni M."/>
            <person name="Cotton M."/>
            <person name="Davidson T."/>
            <person name="Desai A."/>
            <person name="Elliott G."/>
            <person name="Erb T."/>
            <person name="Fronick C."/>
            <person name="Gaige T."/>
            <person name="Haakenson W."/>
            <person name="Haglund K."/>
            <person name="Holmes A."/>
            <person name="Harkins R."/>
            <person name="Kim K."/>
            <person name="Kruchowski S.S."/>
            <person name="Strong C.M."/>
            <person name="Grewal N."/>
            <person name="Goyea E."/>
            <person name="Hou S."/>
            <person name="Levy A."/>
            <person name="Martinka S."/>
            <person name="Mead K."/>
            <person name="McLellan M.D."/>
            <person name="Meyer R."/>
            <person name="Randall-Maher J."/>
            <person name="Tomlinson C."/>
            <person name="Dauphin-Kohlberg S."/>
            <person name="Kozlowicz-Reilly A."/>
            <person name="Shah N."/>
            <person name="Swearengen-Shahid S."/>
            <person name="Snider J."/>
            <person name="Strong J.T."/>
            <person name="Thompson J."/>
            <person name="Yoakum M."/>
            <person name="Leonard S."/>
            <person name="Pearman C."/>
            <person name="Trani L."/>
            <person name="Radionenko M."/>
            <person name="Waligorski J.E."/>
            <person name="Wang C."/>
            <person name="Rock S.M."/>
            <person name="Tin-Wollam A.-M."/>
            <person name="Maupin R."/>
            <person name="Latreille P."/>
            <person name="Wendl M.C."/>
            <person name="Yang S.-P."/>
            <person name="Pohl C."/>
            <person name="Wallis J.W."/>
            <person name="Spieth J."/>
            <person name="Bieri T.A."/>
            <person name="Berkowicz N."/>
            <person name="Nelson J.O."/>
            <person name="Osborne J."/>
            <person name="Ding L."/>
            <person name="Meyer R."/>
            <person name="Sabo A."/>
            <person name="Shotland Y."/>
            <person name="Sinha P."/>
            <person name="Wohldmann P.E."/>
            <person name="Cook L.L."/>
            <person name="Hickenbotham M.T."/>
            <person name="Eldred J."/>
            <person name="Williams D."/>
            <person name="Jones T.A."/>
            <person name="She X."/>
            <person name="Ciccarelli F.D."/>
            <person name="Izaurralde E."/>
            <person name="Taylor J."/>
            <person name="Schmutz J."/>
            <person name="Myers R.M."/>
            <person name="Cox D.R."/>
            <person name="Huang X."/>
            <person name="McPherson J.D."/>
            <person name="Mardis E.R."/>
            <person name="Clifton S.W."/>
            <person name="Warren W.C."/>
            <person name="Chinwalla A.T."/>
            <person name="Eddy S.R."/>
            <person name="Marra M.A."/>
            <person name="Ovcharenko I."/>
            <person name="Furey T.S."/>
            <person name="Miller W."/>
            <person name="Eichler E.E."/>
            <person name="Bork P."/>
            <person name="Suyama M."/>
            <person name="Torrents D."/>
            <person name="Waterston R.H."/>
            <person name="Wilson R.K."/>
        </authorList>
    </citation>
    <scope>NUCLEOTIDE SEQUENCE [LARGE SCALE GENOMIC DNA]</scope>
</reference>
<reference key="6">
    <citation type="journal article" date="2004" name="Genome Res.">
        <title>The status, quality, and expansion of the NIH full-length cDNA project: the Mammalian Gene Collection (MGC).</title>
        <authorList>
            <consortium name="The MGC Project Team"/>
        </authorList>
    </citation>
    <scope>NUCLEOTIDE SEQUENCE [LARGE SCALE MRNA] (ISOFORM 1)</scope>
    <scope>VARIANT TYR-328</scope>
    <source>
        <tissue>PNS</tissue>
    </source>
</reference>
<reference key="7">
    <citation type="journal article" date="2013" name="Am. J. Hum. Genet.">
        <title>Mutations in ECEL1 cause distal arthrogryposis type 5D.</title>
        <authorList>
            <consortium name="University of Washington Center for Mendelian Genomics"/>
            <person name="McMillin M.J."/>
            <person name="Below J.E."/>
            <person name="Shively K.M."/>
            <person name="Beck A.E."/>
            <person name="Gildersleeve H.I."/>
            <person name="Pinner J."/>
            <person name="Gogola G.R."/>
            <person name="Hecht J.T."/>
            <person name="Grange D.K."/>
            <person name="Harris D.J."/>
            <person name="Earl D.L."/>
            <person name="Jagadeesh S."/>
            <person name="Mehta S.G."/>
            <person name="Robertson S.P."/>
            <person name="Swanson J.M."/>
            <person name="Faustman E.M."/>
            <person name="Mefford H.C."/>
            <person name="Shendure J."/>
            <person name="Nickerson D.A."/>
            <person name="Bamshad M.J."/>
        </authorList>
    </citation>
    <scope>VARIANT DA5D SER-418</scope>
</reference>
<reference key="8">
    <citation type="journal article" date="2014" name="Clin. Genet.">
        <title>Expanding the phenotypic spectrum of ECEL1-related congenital contracture syndromes.</title>
        <authorList>
            <person name="Shaaban S."/>
            <person name="Duzcan F."/>
            <person name="Yildirim C."/>
            <person name="Chan W.M."/>
            <person name="Andrews C."/>
            <person name="Akarsu N."/>
            <person name="Engle E."/>
        </authorList>
    </citation>
    <scope>VARIANT DA5D SER-607</scope>
</reference>
<reference key="9">
    <citation type="journal article" date="2014" name="Clin. Genet.">
        <title>Identification of three novel ECEL1 mutations in three families with distal arthrogryposis type 5D.</title>
        <authorList>
            <person name="Shaheen R."/>
            <person name="Al-Owain M."/>
            <person name="Khan A."/>
            <person name="Zaki M."/>
            <person name="Hossni H."/>
            <person name="Al-Tassan R."/>
            <person name="Eyaid W."/>
            <person name="Alkuraya F."/>
        </authorList>
    </citation>
    <scope>VARIANT DA5D CYS-404</scope>
</reference>
<reference key="10">
    <citation type="journal article" date="2013" name="Hum. Mol. Genet.">
        <title>The neuronal endopeptidase ECEL1 is associated with a distinct form of recessive distal arthrogryposis.</title>
        <authorList>
            <person name="Dieterich K."/>
            <person name="Quijano-Roy S."/>
            <person name="Monnier N."/>
            <person name="Zhou J."/>
            <person name="Faure J."/>
            <person name="Smirnow D.A."/>
            <person name="Carlier R."/>
            <person name="Laroche C."/>
            <person name="Marcorelles P."/>
            <person name="Mercier S."/>
            <person name="Megarbane A."/>
            <person name="Odent S."/>
            <person name="Romero N."/>
            <person name="Sternberg D."/>
            <person name="Marty I."/>
            <person name="Estournet B."/>
            <person name="Jouk P.S."/>
            <person name="Melki J."/>
            <person name="Lunardi J."/>
        </authorList>
    </citation>
    <scope>VARIANT DA5D ARG-760</scope>
</reference>
<dbReference type="EC" id="3.4.24.-"/>
<dbReference type="EMBL" id="Y16187">
    <property type="protein sequence ID" value="CAA76113.1"/>
    <property type="molecule type" value="mRNA"/>
</dbReference>
<dbReference type="EMBL" id="AJ130734">
    <property type="protein sequence ID" value="CAB86601.1"/>
    <property type="molecule type" value="Genomic_DNA"/>
</dbReference>
<dbReference type="EMBL" id="DQ114476">
    <property type="protein sequence ID" value="AAZ22338.1"/>
    <property type="molecule type" value="mRNA"/>
</dbReference>
<dbReference type="EMBL" id="AY358923">
    <property type="protein sequence ID" value="AAQ89282.1"/>
    <property type="molecule type" value="mRNA"/>
</dbReference>
<dbReference type="EMBL" id="AC092165">
    <property type="protein sequence ID" value="AAY24101.1"/>
    <property type="molecule type" value="Genomic_DNA"/>
</dbReference>
<dbReference type="EMBL" id="BC050453">
    <property type="protein sequence ID" value="AAH50453.2"/>
    <property type="molecule type" value="mRNA"/>
</dbReference>
<dbReference type="CCDS" id="CCDS2493.1">
    <molecule id="O95672-1"/>
</dbReference>
<dbReference type="CCDS" id="CCDS77540.1">
    <molecule id="O95672-2"/>
</dbReference>
<dbReference type="RefSeq" id="NP_001277716.1">
    <molecule id="O95672-2"/>
    <property type="nucleotide sequence ID" value="NM_001290787.2"/>
</dbReference>
<dbReference type="RefSeq" id="NP_004817.2">
    <molecule id="O95672-1"/>
    <property type="nucleotide sequence ID" value="NM_004826.4"/>
</dbReference>
<dbReference type="SMR" id="O95672"/>
<dbReference type="BioGRID" id="114820">
    <property type="interactions" value="152"/>
</dbReference>
<dbReference type="FunCoup" id="O95672">
    <property type="interactions" value="443"/>
</dbReference>
<dbReference type="IntAct" id="O95672">
    <property type="interactions" value="126"/>
</dbReference>
<dbReference type="STRING" id="9606.ENSP00000302051"/>
<dbReference type="MEROPS" id="M13.007"/>
<dbReference type="GlyCosmos" id="O95672">
    <property type="glycosylation" value="3 sites, No reported glycans"/>
</dbReference>
<dbReference type="GlyGen" id="O95672">
    <property type="glycosylation" value="3 sites, 3 N-linked glycans (3 sites)"/>
</dbReference>
<dbReference type="iPTMnet" id="O95672"/>
<dbReference type="PhosphoSitePlus" id="O95672"/>
<dbReference type="BioMuta" id="ECEL1"/>
<dbReference type="jPOST" id="O95672"/>
<dbReference type="MassIVE" id="O95672"/>
<dbReference type="PaxDb" id="9606-ENSP00000302051"/>
<dbReference type="PeptideAtlas" id="O95672"/>
<dbReference type="ProteomicsDB" id="50986">
    <molecule id="O95672-1"/>
</dbReference>
<dbReference type="ProteomicsDB" id="50987">
    <molecule id="O95672-2"/>
</dbReference>
<dbReference type="Pumba" id="O95672"/>
<dbReference type="Antibodypedia" id="47689">
    <property type="antibodies" value="52 antibodies from 14 providers"/>
</dbReference>
<dbReference type="DNASU" id="9427"/>
<dbReference type="Ensembl" id="ENST00000304546.6">
    <molecule id="O95672-1"/>
    <property type="protein sequence ID" value="ENSP00000302051.1"/>
    <property type="gene ID" value="ENSG00000171551.12"/>
</dbReference>
<dbReference type="Ensembl" id="ENST00000409941.1">
    <molecule id="O95672-2"/>
    <property type="protein sequence ID" value="ENSP00000386333.1"/>
    <property type="gene ID" value="ENSG00000171551.12"/>
</dbReference>
<dbReference type="GeneID" id="9427"/>
<dbReference type="KEGG" id="hsa:9427"/>
<dbReference type="MANE-Select" id="ENST00000304546.6">
    <property type="protein sequence ID" value="ENSP00000302051.1"/>
    <property type="RefSeq nucleotide sequence ID" value="NM_004826.4"/>
    <property type="RefSeq protein sequence ID" value="NP_004817.2"/>
</dbReference>
<dbReference type="UCSC" id="uc002vsv.3">
    <molecule id="O95672-1"/>
    <property type="organism name" value="human"/>
</dbReference>
<dbReference type="AGR" id="HGNC:3147"/>
<dbReference type="CTD" id="9427"/>
<dbReference type="DisGeNET" id="9427"/>
<dbReference type="GeneCards" id="ECEL1"/>
<dbReference type="HGNC" id="HGNC:3147">
    <property type="gene designation" value="ECEL1"/>
</dbReference>
<dbReference type="HPA" id="ENSG00000171551">
    <property type="expression patterns" value="Group enriched (brain, ovary, pituitary gland)"/>
</dbReference>
<dbReference type="MalaCards" id="ECEL1"/>
<dbReference type="MIM" id="605896">
    <property type="type" value="gene"/>
</dbReference>
<dbReference type="MIM" id="615065">
    <property type="type" value="phenotype"/>
</dbReference>
<dbReference type="neXtProt" id="NX_O95672"/>
<dbReference type="OpenTargets" id="ENSG00000171551"/>
<dbReference type="Orphanet" id="329457">
    <property type="disease" value="Distal arthrogryposis type 5D"/>
</dbReference>
<dbReference type="PharmGKB" id="PA27595"/>
<dbReference type="VEuPathDB" id="HostDB:ENSG00000171551"/>
<dbReference type="eggNOG" id="KOG3624">
    <property type="taxonomic scope" value="Eukaryota"/>
</dbReference>
<dbReference type="GeneTree" id="ENSGT00940000157673"/>
<dbReference type="HOGENOM" id="CLU_006187_8_0_1"/>
<dbReference type="InParanoid" id="O95672"/>
<dbReference type="OMA" id="QDFIVWQ"/>
<dbReference type="OrthoDB" id="6475849at2759"/>
<dbReference type="PAN-GO" id="O95672">
    <property type="GO annotations" value="3 GO annotations based on evolutionary models"/>
</dbReference>
<dbReference type="PhylomeDB" id="O95672"/>
<dbReference type="TreeFam" id="TF315192"/>
<dbReference type="PathwayCommons" id="O95672"/>
<dbReference type="SignaLink" id="O95672"/>
<dbReference type="BioGRID-ORCS" id="9427">
    <property type="hits" value="14 hits in 1142 CRISPR screens"/>
</dbReference>
<dbReference type="GeneWiki" id="ECEL1"/>
<dbReference type="GenomeRNAi" id="9427"/>
<dbReference type="Pharos" id="O95672">
    <property type="development level" value="Tbio"/>
</dbReference>
<dbReference type="PRO" id="PR:O95672"/>
<dbReference type="Proteomes" id="UP000005640">
    <property type="component" value="Chromosome 2"/>
</dbReference>
<dbReference type="RNAct" id="O95672">
    <property type="molecule type" value="protein"/>
</dbReference>
<dbReference type="Bgee" id="ENSG00000171551">
    <property type="expression patterns" value="Expressed in left ovary and 104 other cell types or tissues"/>
</dbReference>
<dbReference type="ExpressionAtlas" id="O95672">
    <property type="expression patterns" value="baseline and differential"/>
</dbReference>
<dbReference type="GO" id="GO:0005886">
    <property type="term" value="C:plasma membrane"/>
    <property type="evidence" value="ECO:0000318"/>
    <property type="project" value="GO_Central"/>
</dbReference>
<dbReference type="GO" id="GO:0046872">
    <property type="term" value="F:metal ion binding"/>
    <property type="evidence" value="ECO:0007669"/>
    <property type="project" value="UniProtKB-KW"/>
</dbReference>
<dbReference type="GO" id="GO:0004222">
    <property type="term" value="F:metalloendopeptidase activity"/>
    <property type="evidence" value="ECO:0000318"/>
    <property type="project" value="GO_Central"/>
</dbReference>
<dbReference type="GO" id="GO:0008237">
    <property type="term" value="F:metallopeptidase activity"/>
    <property type="evidence" value="ECO:0000304"/>
    <property type="project" value="ProtInc"/>
</dbReference>
<dbReference type="GO" id="GO:0007218">
    <property type="term" value="P:neuropeptide signaling pathway"/>
    <property type="evidence" value="ECO:0000304"/>
    <property type="project" value="ProtInc"/>
</dbReference>
<dbReference type="GO" id="GO:0016485">
    <property type="term" value="P:protein processing"/>
    <property type="evidence" value="ECO:0000318"/>
    <property type="project" value="GO_Central"/>
</dbReference>
<dbReference type="GO" id="GO:0003016">
    <property type="term" value="P:respiratory system process"/>
    <property type="evidence" value="ECO:0000250"/>
    <property type="project" value="UniProtKB"/>
</dbReference>
<dbReference type="CDD" id="cd08662">
    <property type="entry name" value="M13"/>
    <property type="match status" value="1"/>
</dbReference>
<dbReference type="Gene3D" id="3.40.390.10">
    <property type="entry name" value="Collagenase (Catalytic Domain)"/>
    <property type="match status" value="1"/>
</dbReference>
<dbReference type="Gene3D" id="1.10.1380.10">
    <property type="entry name" value="Neutral endopeptidase , domain2"/>
    <property type="match status" value="1"/>
</dbReference>
<dbReference type="InterPro" id="IPR024079">
    <property type="entry name" value="MetalloPept_cat_dom_sf"/>
</dbReference>
<dbReference type="InterPro" id="IPR000718">
    <property type="entry name" value="Peptidase_M13"/>
</dbReference>
<dbReference type="InterPro" id="IPR018497">
    <property type="entry name" value="Peptidase_M13_C"/>
</dbReference>
<dbReference type="InterPro" id="IPR042089">
    <property type="entry name" value="Peptidase_M13_dom_2"/>
</dbReference>
<dbReference type="InterPro" id="IPR008753">
    <property type="entry name" value="Peptidase_M13_N"/>
</dbReference>
<dbReference type="PANTHER" id="PTHR11733:SF195">
    <property type="entry name" value="ENDOTHELIN-CONVERTING ENZYME-LIKE 1"/>
    <property type="match status" value="1"/>
</dbReference>
<dbReference type="PANTHER" id="PTHR11733">
    <property type="entry name" value="ZINC METALLOPROTEASE FAMILY M13 NEPRILYSIN-RELATED"/>
    <property type="match status" value="1"/>
</dbReference>
<dbReference type="Pfam" id="PF01431">
    <property type="entry name" value="Peptidase_M13"/>
    <property type="match status" value="1"/>
</dbReference>
<dbReference type="Pfam" id="PF05649">
    <property type="entry name" value="Peptidase_M13_N"/>
    <property type="match status" value="1"/>
</dbReference>
<dbReference type="PRINTS" id="PR00786">
    <property type="entry name" value="NEPRILYSIN"/>
</dbReference>
<dbReference type="SUPFAM" id="SSF55486">
    <property type="entry name" value="Metalloproteases ('zincins'), catalytic domain"/>
    <property type="match status" value="1"/>
</dbReference>
<dbReference type="PROSITE" id="PS51885">
    <property type="entry name" value="NEPRILYSIN"/>
    <property type="match status" value="1"/>
</dbReference>
<dbReference type="PROSITE" id="PS00142">
    <property type="entry name" value="ZINC_PROTEASE"/>
    <property type="match status" value="1"/>
</dbReference>
<feature type="chain" id="PRO_0000078224" description="Endothelin-converting enzyme-like 1">
    <location>
        <begin position="1"/>
        <end position="775"/>
    </location>
</feature>
<feature type="topological domain" description="Cytoplasmic" evidence="2">
    <location>
        <begin position="1"/>
        <end position="59"/>
    </location>
</feature>
<feature type="transmembrane region" description="Helical; Signal-anchor for type II membrane protein" evidence="2">
    <location>
        <begin position="60"/>
        <end position="82"/>
    </location>
</feature>
<feature type="topological domain" description="Lumenal" evidence="2">
    <location>
        <begin position="83"/>
        <end position="775"/>
    </location>
</feature>
<feature type="domain" description="Peptidase M13" evidence="3">
    <location>
        <begin position="98"/>
        <end position="775"/>
    </location>
</feature>
<feature type="active site" evidence="3 4">
    <location>
        <position position="613"/>
    </location>
</feature>
<feature type="active site" description="Proton donor" evidence="3">
    <location>
        <position position="676"/>
    </location>
</feature>
<feature type="binding site" evidence="3 4">
    <location>
        <position position="612"/>
    </location>
    <ligand>
        <name>Zn(2+)</name>
        <dbReference type="ChEBI" id="CHEBI:29105"/>
        <note>catalytic</note>
    </ligand>
</feature>
<feature type="binding site" evidence="3 4">
    <location>
        <position position="616"/>
    </location>
    <ligand>
        <name>Zn(2+)</name>
        <dbReference type="ChEBI" id="CHEBI:29105"/>
        <note>catalytic</note>
    </ligand>
</feature>
<feature type="binding site" evidence="3">
    <location>
        <position position="672"/>
    </location>
    <ligand>
        <name>Zn(2+)</name>
        <dbReference type="ChEBI" id="CHEBI:29105"/>
        <note>catalytic</note>
    </ligand>
</feature>
<feature type="glycosylation site" description="N-linked (GlcNAc...) asparagine" evidence="2">
    <location>
        <position position="255"/>
    </location>
</feature>
<feature type="glycosylation site" description="N-linked (GlcNAc...) asparagine" evidence="2">
    <location>
        <position position="322"/>
    </location>
</feature>
<feature type="glycosylation site" description="N-linked (GlcNAc...) asparagine" evidence="2">
    <location>
        <position position="656"/>
    </location>
</feature>
<feature type="disulfide bond" evidence="3">
    <location>
        <begin position="123"/>
        <end position="760"/>
    </location>
</feature>
<feature type="disulfide bond" evidence="3">
    <location>
        <begin position="131"/>
        <end position="720"/>
    </location>
</feature>
<feature type="disulfide bond" evidence="3">
    <location>
        <begin position="187"/>
        <end position="441"/>
    </location>
</feature>
<feature type="disulfide bond" evidence="3">
    <location>
        <begin position="649"/>
        <end position="772"/>
    </location>
</feature>
<feature type="splice variant" id="VSP_017544" description="In isoform 2." evidence="14">
    <location>
        <begin position="561"/>
        <end position="562"/>
    </location>
</feature>
<feature type="sequence variant" id="VAR_012813" description="In dbSNP:rs2741281.">
    <original>H</original>
    <variation>Q</variation>
    <location>
        <position position="10"/>
    </location>
</feature>
<feature type="sequence variant" id="VAR_012814" description="In dbSNP:rs1529874." evidence="5 6 7 12 13">
    <original>H</original>
    <variation>Y</variation>
    <location>
        <position position="328"/>
    </location>
</feature>
<feature type="sequence variant" id="VAR_069993" description="In DA5D; dbSNP:rs532757890." evidence="11">
    <original>R</original>
    <variation>C</variation>
    <location>
        <position position="404"/>
    </location>
</feature>
<feature type="sequence variant" id="VAR_069747" description="In DA5D; dbSNP:rs587776919." evidence="9">
    <original>R</original>
    <variation>S</variation>
    <location>
        <position position="418"/>
    </location>
</feature>
<feature type="sequence variant" id="VAR_069994" description="In DA5D; patients have ophthalmoplegia." evidence="10">
    <original>G</original>
    <variation>S</variation>
    <location>
        <position position="607"/>
    </location>
</feature>
<feature type="sequence variant" id="VAR_069995" description="In DA5D; dbSNP:rs587777129." evidence="8">
    <original>C</original>
    <variation>R</variation>
    <location>
        <position position="760"/>
    </location>
</feature>
<feature type="sequence conflict" description="In Ref. 4; AAQ89282." evidence="15" ref="4">
    <original>A</original>
    <variation>V</variation>
    <location>
        <position position="45"/>
    </location>
</feature>
<feature type="sequence conflict" description="In Ref. 3; AAZ22338." evidence="15" ref="3">
    <original>Q</original>
    <variation>R</variation>
    <location>
        <position position="124"/>
    </location>
</feature>
<feature type="sequence conflict" description="In Ref. 3; AAZ22338." evidence="15" ref="3">
    <original>A</original>
    <variation>T</variation>
    <location>
        <position position="152"/>
    </location>
</feature>
<feature type="sequence conflict" description="In Ref. 3; AAZ22338." evidence="15" ref="3">
    <original>R</original>
    <variation>C</variation>
    <location>
        <position position="163"/>
    </location>
</feature>
<feature type="sequence conflict" description="In Ref. 1; CAA76113." evidence="15" ref="1">
    <original>I</original>
    <variation>V</variation>
    <location>
        <position position="286"/>
    </location>
</feature>
<feature type="sequence conflict" description="In Ref. 3; AAZ22338." evidence="15" ref="3">
    <original>F</original>
    <variation>L</variation>
    <location>
        <position position="293"/>
    </location>
</feature>
<feature type="sequence conflict" description="In Ref. 4; AAQ89282." evidence="15" ref="4">
    <original>R</original>
    <variation>P</variation>
    <location>
        <position position="544"/>
    </location>
</feature>
<feature type="sequence conflict" description="In Ref. 4; AAQ89282." evidence="15" ref="4">
    <original>G</original>
    <variation>V</variation>
    <location>
        <position position="679"/>
    </location>
</feature>
<feature type="sequence conflict" description="In Ref. 1; CAA76113." evidence="15" ref="1">
    <original>AF</original>
    <variation>VL</variation>
    <location>
        <begin position="757"/>
        <end position="758"/>
    </location>
</feature>
<feature type="sequence conflict" description="In Ref. 1; CAA76113." evidence="15" ref="1">
    <original>D</original>
    <variation>V</variation>
    <location>
        <position position="763"/>
    </location>
</feature>